<proteinExistence type="inferred from homology"/>
<name>GLGB1_RHIJ3</name>
<reference key="1">
    <citation type="journal article" date="2006" name="Genome Biol.">
        <title>The genome of Rhizobium leguminosarum has recognizable core and accessory components.</title>
        <authorList>
            <person name="Young J.P.W."/>
            <person name="Crossman L.C."/>
            <person name="Johnston A.W.B."/>
            <person name="Thomson N.R."/>
            <person name="Ghazoui Z.F."/>
            <person name="Hull K.H."/>
            <person name="Wexler M."/>
            <person name="Curson A.R.J."/>
            <person name="Todd J.D."/>
            <person name="Poole P.S."/>
            <person name="Mauchline T.H."/>
            <person name="East A.K."/>
            <person name="Quail M.A."/>
            <person name="Churcher C."/>
            <person name="Arrowsmith C."/>
            <person name="Cherevach I."/>
            <person name="Chillingworth T."/>
            <person name="Clarke K."/>
            <person name="Cronin A."/>
            <person name="Davis P."/>
            <person name="Fraser A."/>
            <person name="Hance Z."/>
            <person name="Hauser H."/>
            <person name="Jagels K."/>
            <person name="Moule S."/>
            <person name="Mungall K."/>
            <person name="Norbertczak H."/>
            <person name="Rabbinowitsch E."/>
            <person name="Sanders M."/>
            <person name="Simmonds M."/>
            <person name="Whitehead S."/>
            <person name="Parkhill J."/>
        </authorList>
    </citation>
    <scope>NUCLEOTIDE SEQUENCE [LARGE SCALE GENOMIC DNA]</scope>
    <source>
        <strain>DSM 114642 / LMG 32736 / 3841</strain>
    </source>
</reference>
<sequence>MKTPKTVPEVKLSWEISADEITAILAGSHSNPFAVLGVHQAGDAFVARCFIPGAEEVTAMTLDGGVIGELKQLHADGVFAGPVSLTKLQPVRYRARRGDAEWAVTDPYSFGPVLGPMDDYFAREGSHLRLFDKMGAHLIKHDGAQGIHFAVWAPNAQRVSVVGDFNNWDGRRHVMRFRSDSGIWEIFAPDVPIGVAYKFEIRGQDGVLLPLKADPFARRSELRPKTASVTAAELEQEWEDEAHLKHWRETDKRRQPISIYEVHAASWQRRQDGTMLSWDELASSLIPYCADMGFTHIEFLPITEYPYDPSWGYQTTGLYAPTARFGEPEGFARFVNGCHKVGIGVILDWVPAHFPTDEHGLGWFDGTALYEHEDPRKGFHPDWSTAIYNFGRTEVVSYLVNNALYWAEKFHLDGLRVDAVASMLYLDYSRKHGEWIPNEYGGNENLEAVRFLQDLNIRIYGKNSNVMTIAEESTSWPKVSQPVHEGGLGFGFKWNMGFMHDTLSYMSRDPIYRGHHHNELTFGLLYAYSENFVLPLSHDEVVHGKGSLIAKMPGDDWQKFANLRAYYAYMWGYPGKKLLFMGQEFAQWSEWSEEKALDWNLLQYRMHEGMRRLVRDLNFTYRSKPALHARDCEGEGFEWLVADDHQNSVFAWLRKAPGQKPVAVITNFTPIYRENYSIRLPSAGRWREILNTDADIYGGSGKGNGGRVQAVDAGGNITCSITLPPLATIMLEPEN</sequence>
<accession>Q1MBS9</accession>
<keyword id="KW-0119">Carbohydrate metabolism</keyword>
<keyword id="KW-0320">Glycogen biosynthesis</keyword>
<keyword id="KW-0321">Glycogen metabolism</keyword>
<keyword id="KW-0328">Glycosyltransferase</keyword>
<keyword id="KW-0808">Transferase</keyword>
<comment type="function">
    <text evidence="1">Catalyzes the formation of the alpha-1,6-glucosidic linkages in glycogen by scission of a 1,4-alpha-linked oligosaccharide from growing alpha-1,4-glucan chains and the subsequent attachment of the oligosaccharide to the alpha-1,6 position.</text>
</comment>
<comment type="catalytic activity">
    <reaction evidence="1">
        <text>Transfers a segment of a (1-&gt;4)-alpha-D-glucan chain to a primary hydroxy group in a similar glucan chain.</text>
        <dbReference type="EC" id="2.4.1.18"/>
    </reaction>
</comment>
<comment type="pathway">
    <text evidence="1">Glycan biosynthesis; glycogen biosynthesis.</text>
</comment>
<comment type="subunit">
    <text evidence="1">Monomer.</text>
</comment>
<comment type="similarity">
    <text evidence="1">Belongs to the glycosyl hydrolase 13 family. GlgB subfamily.</text>
</comment>
<gene>
    <name evidence="1" type="primary">glgB1</name>
    <name type="ordered locus">RL4115</name>
</gene>
<dbReference type="EC" id="2.4.1.18" evidence="1"/>
<dbReference type="EMBL" id="AM236080">
    <property type="protein sequence ID" value="CAK09604.1"/>
    <property type="molecule type" value="Genomic_DNA"/>
</dbReference>
<dbReference type="SMR" id="Q1MBS9"/>
<dbReference type="CAZy" id="CBM48">
    <property type="family name" value="Carbohydrate-Binding Module Family 48"/>
</dbReference>
<dbReference type="CAZy" id="GH13">
    <property type="family name" value="Glycoside Hydrolase Family 13"/>
</dbReference>
<dbReference type="EnsemblBacteria" id="CAK09604">
    <property type="protein sequence ID" value="CAK09604"/>
    <property type="gene ID" value="RL4115"/>
</dbReference>
<dbReference type="KEGG" id="rle:RL4115"/>
<dbReference type="eggNOG" id="COG0296">
    <property type="taxonomic scope" value="Bacteria"/>
</dbReference>
<dbReference type="HOGENOM" id="CLU_004245_3_2_5"/>
<dbReference type="UniPathway" id="UPA00164"/>
<dbReference type="Proteomes" id="UP000006575">
    <property type="component" value="Chromosome"/>
</dbReference>
<dbReference type="GO" id="GO:0005829">
    <property type="term" value="C:cytosol"/>
    <property type="evidence" value="ECO:0007669"/>
    <property type="project" value="TreeGrafter"/>
</dbReference>
<dbReference type="GO" id="GO:0003844">
    <property type="term" value="F:1,4-alpha-glucan branching enzyme activity"/>
    <property type="evidence" value="ECO:0007669"/>
    <property type="project" value="UniProtKB-UniRule"/>
</dbReference>
<dbReference type="GO" id="GO:0043169">
    <property type="term" value="F:cation binding"/>
    <property type="evidence" value="ECO:0007669"/>
    <property type="project" value="InterPro"/>
</dbReference>
<dbReference type="GO" id="GO:0004553">
    <property type="term" value="F:hydrolase activity, hydrolyzing O-glycosyl compounds"/>
    <property type="evidence" value="ECO:0007669"/>
    <property type="project" value="InterPro"/>
</dbReference>
<dbReference type="GO" id="GO:0005978">
    <property type="term" value="P:glycogen biosynthetic process"/>
    <property type="evidence" value="ECO:0007669"/>
    <property type="project" value="UniProtKB-UniRule"/>
</dbReference>
<dbReference type="CDD" id="cd11322">
    <property type="entry name" value="AmyAc_Glg_BE"/>
    <property type="match status" value="1"/>
</dbReference>
<dbReference type="CDD" id="cd02855">
    <property type="entry name" value="E_set_GBE_prok_N"/>
    <property type="match status" value="1"/>
</dbReference>
<dbReference type="FunFam" id="2.60.40.10:FF:000169">
    <property type="entry name" value="1,4-alpha-glucan branching enzyme GlgB"/>
    <property type="match status" value="1"/>
</dbReference>
<dbReference type="FunFam" id="2.60.40.1180:FF:000002">
    <property type="entry name" value="1,4-alpha-glucan branching enzyme GlgB"/>
    <property type="match status" value="1"/>
</dbReference>
<dbReference type="FunFam" id="3.20.20.80:FF:000003">
    <property type="entry name" value="1,4-alpha-glucan branching enzyme GlgB"/>
    <property type="match status" value="1"/>
</dbReference>
<dbReference type="Gene3D" id="3.20.20.80">
    <property type="entry name" value="Glycosidases"/>
    <property type="match status" value="1"/>
</dbReference>
<dbReference type="Gene3D" id="2.60.40.1180">
    <property type="entry name" value="Golgi alpha-mannosidase II"/>
    <property type="match status" value="1"/>
</dbReference>
<dbReference type="Gene3D" id="2.60.40.10">
    <property type="entry name" value="Immunoglobulins"/>
    <property type="match status" value="1"/>
</dbReference>
<dbReference type="HAMAP" id="MF_00685">
    <property type="entry name" value="GlgB"/>
    <property type="match status" value="1"/>
</dbReference>
<dbReference type="InterPro" id="IPR006048">
    <property type="entry name" value="A-amylase/branching_C"/>
</dbReference>
<dbReference type="InterPro" id="IPR037439">
    <property type="entry name" value="Branching_enzy"/>
</dbReference>
<dbReference type="InterPro" id="IPR006407">
    <property type="entry name" value="GlgB"/>
</dbReference>
<dbReference type="InterPro" id="IPR054169">
    <property type="entry name" value="GlgB_N"/>
</dbReference>
<dbReference type="InterPro" id="IPR044143">
    <property type="entry name" value="GlgB_N_E_set_prok"/>
</dbReference>
<dbReference type="InterPro" id="IPR006047">
    <property type="entry name" value="Glyco_hydro_13_cat_dom"/>
</dbReference>
<dbReference type="InterPro" id="IPR004193">
    <property type="entry name" value="Glyco_hydro_13_N"/>
</dbReference>
<dbReference type="InterPro" id="IPR013780">
    <property type="entry name" value="Glyco_hydro_b"/>
</dbReference>
<dbReference type="InterPro" id="IPR017853">
    <property type="entry name" value="Glycoside_hydrolase_SF"/>
</dbReference>
<dbReference type="InterPro" id="IPR013783">
    <property type="entry name" value="Ig-like_fold"/>
</dbReference>
<dbReference type="InterPro" id="IPR014756">
    <property type="entry name" value="Ig_E-set"/>
</dbReference>
<dbReference type="NCBIfam" id="TIGR01515">
    <property type="entry name" value="branching_enzym"/>
    <property type="match status" value="1"/>
</dbReference>
<dbReference type="NCBIfam" id="NF003811">
    <property type="entry name" value="PRK05402.1"/>
    <property type="match status" value="1"/>
</dbReference>
<dbReference type="NCBIfam" id="NF008967">
    <property type="entry name" value="PRK12313.1"/>
    <property type="match status" value="1"/>
</dbReference>
<dbReference type="PANTHER" id="PTHR43651">
    <property type="entry name" value="1,4-ALPHA-GLUCAN-BRANCHING ENZYME"/>
    <property type="match status" value="1"/>
</dbReference>
<dbReference type="PANTHER" id="PTHR43651:SF3">
    <property type="entry name" value="1,4-ALPHA-GLUCAN-BRANCHING ENZYME"/>
    <property type="match status" value="1"/>
</dbReference>
<dbReference type="Pfam" id="PF00128">
    <property type="entry name" value="Alpha-amylase"/>
    <property type="match status" value="1"/>
</dbReference>
<dbReference type="Pfam" id="PF02806">
    <property type="entry name" value="Alpha-amylase_C"/>
    <property type="match status" value="1"/>
</dbReference>
<dbReference type="Pfam" id="PF02922">
    <property type="entry name" value="CBM_48"/>
    <property type="match status" value="1"/>
</dbReference>
<dbReference type="Pfam" id="PF22019">
    <property type="entry name" value="GlgB_N"/>
    <property type="match status" value="1"/>
</dbReference>
<dbReference type="PIRSF" id="PIRSF000463">
    <property type="entry name" value="GlgB"/>
    <property type="match status" value="1"/>
</dbReference>
<dbReference type="SMART" id="SM00642">
    <property type="entry name" value="Aamy"/>
    <property type="match status" value="1"/>
</dbReference>
<dbReference type="SUPFAM" id="SSF51445">
    <property type="entry name" value="(Trans)glycosidases"/>
    <property type="match status" value="1"/>
</dbReference>
<dbReference type="SUPFAM" id="SSF81296">
    <property type="entry name" value="E set domains"/>
    <property type="match status" value="1"/>
</dbReference>
<dbReference type="SUPFAM" id="SSF51011">
    <property type="entry name" value="Glycosyl hydrolase domain"/>
    <property type="match status" value="1"/>
</dbReference>
<feature type="chain" id="PRO_0000260684" description="1,4-alpha-glucan branching enzyme GlgB 1">
    <location>
        <begin position="1"/>
        <end position="735"/>
    </location>
</feature>
<feature type="active site" description="Nucleophile" evidence="1">
    <location>
        <position position="418"/>
    </location>
</feature>
<feature type="active site" description="Proton donor" evidence="1">
    <location>
        <position position="471"/>
    </location>
</feature>
<organism>
    <name type="scientific">Rhizobium johnstonii (strain DSM 114642 / LMG 32736 / 3841)</name>
    <name type="common">Rhizobium leguminosarum bv. viciae</name>
    <dbReference type="NCBI Taxonomy" id="216596"/>
    <lineage>
        <taxon>Bacteria</taxon>
        <taxon>Pseudomonadati</taxon>
        <taxon>Pseudomonadota</taxon>
        <taxon>Alphaproteobacteria</taxon>
        <taxon>Hyphomicrobiales</taxon>
        <taxon>Rhizobiaceae</taxon>
        <taxon>Rhizobium/Agrobacterium group</taxon>
        <taxon>Rhizobium</taxon>
        <taxon>Rhizobium johnstonii</taxon>
    </lineage>
</organism>
<evidence type="ECO:0000255" key="1">
    <source>
        <dbReference type="HAMAP-Rule" id="MF_00685"/>
    </source>
</evidence>
<protein>
    <recommendedName>
        <fullName evidence="1">1,4-alpha-glucan branching enzyme GlgB 1</fullName>
        <ecNumber evidence="1">2.4.1.18</ecNumber>
    </recommendedName>
    <alternativeName>
        <fullName evidence="1">1,4-alpha-D-glucan:1,4-alpha-D-glucan 6-glucosyl-transferase 1</fullName>
    </alternativeName>
    <alternativeName>
        <fullName evidence="1">Alpha-(1-&gt;4)-glucan branching enzyme 1</fullName>
    </alternativeName>
    <alternativeName>
        <fullName evidence="1">Glycogen branching enzyme 1</fullName>
        <shortName evidence="1">BE 1</shortName>
    </alternativeName>
</protein>